<keyword id="KW-0175">Coiled coil</keyword>
<keyword id="KW-0963">Cytoplasm</keyword>
<keyword id="KW-0206">Cytoskeleton</keyword>
<keyword id="KW-0449">Lipoprotein</keyword>
<keyword id="KW-0519">Myristate</keyword>
<keyword id="KW-0597">Phosphoprotein</keyword>
<keyword id="KW-1267">Proteomics identification</keyword>
<keyword id="KW-1185">Reference proteome</keyword>
<accession>A6NI79</accession>
<accession>A8K9X6</accession>
<protein>
    <recommendedName>
        <fullName evidence="6">Coiled-coil domain-containing protein 69</fullName>
    </recommendedName>
</protein>
<proteinExistence type="evidence at protein level"/>
<evidence type="ECO:0000250" key="1">
    <source>
        <dbReference type="UniProtKB" id="Q3TCJ8"/>
    </source>
</evidence>
<evidence type="ECO:0000255" key="2"/>
<evidence type="ECO:0000256" key="3">
    <source>
        <dbReference type="SAM" id="MobiDB-lite"/>
    </source>
</evidence>
<evidence type="ECO:0000269" key="4">
    <source>
    </source>
</evidence>
<evidence type="ECO:0000269" key="5">
    <source>
    </source>
</evidence>
<evidence type="ECO:0000305" key="6"/>
<evidence type="ECO:0000305" key="7">
    <source>
    </source>
</evidence>
<evidence type="ECO:0000312" key="8">
    <source>
        <dbReference type="HGNC" id="HGNC:24487"/>
    </source>
</evidence>
<evidence type="ECO:0007744" key="9">
    <source>
    </source>
</evidence>
<evidence type="ECO:0007744" key="10">
    <source>
    </source>
</evidence>
<feature type="initiator methionine" description="Removed" evidence="2">
    <location>
        <position position="1"/>
    </location>
</feature>
<feature type="chain" id="PRO_0000328962" description="Coiled-coil domain-containing protein 69">
    <location>
        <begin position="2"/>
        <end position="296"/>
    </location>
</feature>
<feature type="region of interest" description="Disordered" evidence="3">
    <location>
        <begin position="1"/>
        <end position="41"/>
    </location>
</feature>
<feature type="coiled-coil region" evidence="2">
    <location>
        <begin position="48"/>
        <end position="272"/>
    </location>
</feature>
<feature type="compositionally biased region" description="Basic residues" evidence="3">
    <location>
        <begin position="1"/>
        <end position="18"/>
    </location>
</feature>
<feature type="compositionally biased region" description="Basic and acidic residues" evidence="3">
    <location>
        <begin position="19"/>
        <end position="33"/>
    </location>
</feature>
<feature type="modified residue" description="Phosphoserine" evidence="1">
    <location>
        <position position="154"/>
    </location>
</feature>
<feature type="modified residue" description="Phosphoserine" evidence="9 10">
    <location>
        <position position="241"/>
    </location>
</feature>
<feature type="lipid moiety-binding region" description="N-myristoyl glycine" evidence="2">
    <location>
        <position position="2"/>
    </location>
</feature>
<feature type="sequence variant" id="VAR_042584" description="In dbSNP:rs248427." evidence="4">
    <original>R</original>
    <variation>K</variation>
    <location>
        <position position="197"/>
    </location>
</feature>
<name>CCD69_HUMAN</name>
<organism>
    <name type="scientific">Homo sapiens</name>
    <name type="common">Human</name>
    <dbReference type="NCBI Taxonomy" id="9606"/>
    <lineage>
        <taxon>Eukaryota</taxon>
        <taxon>Metazoa</taxon>
        <taxon>Chordata</taxon>
        <taxon>Craniata</taxon>
        <taxon>Vertebrata</taxon>
        <taxon>Euteleostomi</taxon>
        <taxon>Mammalia</taxon>
        <taxon>Eutheria</taxon>
        <taxon>Euarchontoglires</taxon>
        <taxon>Primates</taxon>
        <taxon>Haplorrhini</taxon>
        <taxon>Catarrhini</taxon>
        <taxon>Hominidae</taxon>
        <taxon>Homo</taxon>
    </lineage>
</organism>
<dbReference type="EMBL" id="AK292841">
    <property type="protein sequence ID" value="BAF85530.1"/>
    <property type="molecule type" value="mRNA"/>
</dbReference>
<dbReference type="EMBL" id="AC011342">
    <property type="status" value="NOT_ANNOTATED_CDS"/>
    <property type="molecule type" value="Genomic_DNA"/>
</dbReference>
<dbReference type="CCDS" id="CCDS4312.1"/>
<dbReference type="RefSeq" id="NP_056436.2">
    <property type="nucleotide sequence ID" value="NM_015621.2"/>
</dbReference>
<dbReference type="SMR" id="A6NI79"/>
<dbReference type="BioGRID" id="117558">
    <property type="interactions" value="29"/>
</dbReference>
<dbReference type="FunCoup" id="A6NI79">
    <property type="interactions" value="586"/>
</dbReference>
<dbReference type="IntAct" id="A6NI79">
    <property type="interactions" value="27"/>
</dbReference>
<dbReference type="MINT" id="A6NI79"/>
<dbReference type="STRING" id="9606.ENSP00000347586"/>
<dbReference type="iPTMnet" id="A6NI79"/>
<dbReference type="PhosphoSitePlus" id="A6NI79"/>
<dbReference type="SwissPalm" id="A6NI79"/>
<dbReference type="BioMuta" id="CCDC69"/>
<dbReference type="jPOST" id="A6NI79"/>
<dbReference type="MassIVE" id="A6NI79"/>
<dbReference type="PaxDb" id="9606-ENSP00000347586"/>
<dbReference type="PeptideAtlas" id="A6NI79"/>
<dbReference type="ProteomicsDB" id="1255"/>
<dbReference type="TopDownProteomics" id="A6NI79"/>
<dbReference type="Antibodypedia" id="28179">
    <property type="antibodies" value="142 antibodies from 23 providers"/>
</dbReference>
<dbReference type="DNASU" id="26112"/>
<dbReference type="Ensembl" id="ENST00000355417.7">
    <property type="protein sequence ID" value="ENSP00000347586.2"/>
    <property type="gene ID" value="ENSG00000198624.13"/>
</dbReference>
<dbReference type="GeneID" id="26112"/>
<dbReference type="KEGG" id="hsa:26112"/>
<dbReference type="MANE-Select" id="ENST00000355417.7">
    <property type="protein sequence ID" value="ENSP00000347586.2"/>
    <property type="RefSeq nucleotide sequence ID" value="NM_015621.3"/>
    <property type="RefSeq protein sequence ID" value="NP_056436.2"/>
</dbReference>
<dbReference type="UCSC" id="uc003ltq.4">
    <property type="organism name" value="human"/>
</dbReference>
<dbReference type="AGR" id="HGNC:24487"/>
<dbReference type="CTD" id="26112"/>
<dbReference type="DisGeNET" id="26112"/>
<dbReference type="GeneCards" id="CCDC69"/>
<dbReference type="HGNC" id="HGNC:24487">
    <property type="gene designation" value="CCDC69"/>
</dbReference>
<dbReference type="HPA" id="ENSG00000198624">
    <property type="expression patterns" value="Tissue enhanced (skeletal)"/>
</dbReference>
<dbReference type="MIM" id="619288">
    <property type="type" value="gene"/>
</dbReference>
<dbReference type="neXtProt" id="NX_A6NI79"/>
<dbReference type="OpenTargets" id="ENSG00000198624"/>
<dbReference type="PharmGKB" id="PA128394640"/>
<dbReference type="VEuPathDB" id="HostDB:ENSG00000198624"/>
<dbReference type="eggNOG" id="ENOG502RYPP">
    <property type="taxonomic scope" value="Eukaryota"/>
</dbReference>
<dbReference type="GeneTree" id="ENSGT00950000183026"/>
<dbReference type="HOGENOM" id="CLU_079661_0_0_1"/>
<dbReference type="InParanoid" id="A6NI79"/>
<dbReference type="OMA" id="DSCPTIH"/>
<dbReference type="OrthoDB" id="10038993at2759"/>
<dbReference type="PAN-GO" id="A6NI79">
    <property type="GO annotations" value="3 GO annotations based on evolutionary models"/>
</dbReference>
<dbReference type="PhylomeDB" id="A6NI79"/>
<dbReference type="PathwayCommons" id="A6NI79"/>
<dbReference type="SignaLink" id="A6NI79"/>
<dbReference type="SIGNOR" id="A6NI79"/>
<dbReference type="BioGRID-ORCS" id="26112">
    <property type="hits" value="11 hits in 1156 CRISPR screens"/>
</dbReference>
<dbReference type="ChiTaRS" id="CCDC69">
    <property type="organism name" value="human"/>
</dbReference>
<dbReference type="GenomeRNAi" id="26112"/>
<dbReference type="Pharos" id="A6NI79">
    <property type="development level" value="Tdark"/>
</dbReference>
<dbReference type="PRO" id="PR:A6NI79"/>
<dbReference type="Proteomes" id="UP000005640">
    <property type="component" value="Chromosome 5"/>
</dbReference>
<dbReference type="RNAct" id="A6NI79">
    <property type="molecule type" value="protein"/>
</dbReference>
<dbReference type="Bgee" id="ENSG00000198624">
    <property type="expression patterns" value="Expressed in mucosa of stomach and 188 other cell types or tissues"/>
</dbReference>
<dbReference type="ExpressionAtlas" id="A6NI79">
    <property type="expression patterns" value="baseline and differential"/>
</dbReference>
<dbReference type="GO" id="GO:0005737">
    <property type="term" value="C:cytoplasm"/>
    <property type="evidence" value="ECO:0007669"/>
    <property type="project" value="UniProtKB-KW"/>
</dbReference>
<dbReference type="GO" id="GO:0030496">
    <property type="term" value="C:midbody"/>
    <property type="evidence" value="ECO:0007669"/>
    <property type="project" value="UniProtKB-SubCell"/>
</dbReference>
<dbReference type="GO" id="GO:0005634">
    <property type="term" value="C:nucleus"/>
    <property type="evidence" value="ECO:0000318"/>
    <property type="project" value="GO_Central"/>
</dbReference>
<dbReference type="GO" id="GO:0051233">
    <property type="term" value="C:spindle midzone"/>
    <property type="evidence" value="ECO:0000314"/>
    <property type="project" value="UniProtKB"/>
</dbReference>
<dbReference type="GO" id="GO:0008017">
    <property type="term" value="F:microtubule binding"/>
    <property type="evidence" value="ECO:0000318"/>
    <property type="project" value="GO_Central"/>
</dbReference>
<dbReference type="GO" id="GO:0051255">
    <property type="term" value="P:spindle midzone assembly"/>
    <property type="evidence" value="ECO:0000315"/>
    <property type="project" value="UniProtKB"/>
</dbReference>
<dbReference type="InterPro" id="IPR051293">
    <property type="entry name" value="MTUS1/CCDC69"/>
</dbReference>
<dbReference type="PANTHER" id="PTHR24200:SF6">
    <property type="entry name" value="COILED-COIL DOMAIN-CONTAINING PROTEIN 69"/>
    <property type="match status" value="1"/>
</dbReference>
<dbReference type="PANTHER" id="PTHR24200">
    <property type="entry name" value="TOUCAN, ISOFORM A"/>
    <property type="match status" value="1"/>
</dbReference>
<reference key="1">
    <citation type="journal article" date="2004" name="Nat. Genet.">
        <title>Complete sequencing and characterization of 21,243 full-length human cDNAs.</title>
        <authorList>
            <person name="Ota T."/>
            <person name="Suzuki Y."/>
            <person name="Nishikawa T."/>
            <person name="Otsuki T."/>
            <person name="Sugiyama T."/>
            <person name="Irie R."/>
            <person name="Wakamatsu A."/>
            <person name="Hayashi K."/>
            <person name="Sato H."/>
            <person name="Nagai K."/>
            <person name="Kimura K."/>
            <person name="Makita H."/>
            <person name="Sekine M."/>
            <person name="Obayashi M."/>
            <person name="Nishi T."/>
            <person name="Shibahara T."/>
            <person name="Tanaka T."/>
            <person name="Ishii S."/>
            <person name="Yamamoto J."/>
            <person name="Saito K."/>
            <person name="Kawai Y."/>
            <person name="Isono Y."/>
            <person name="Nakamura Y."/>
            <person name="Nagahari K."/>
            <person name="Murakami K."/>
            <person name="Yasuda T."/>
            <person name="Iwayanagi T."/>
            <person name="Wagatsuma M."/>
            <person name="Shiratori A."/>
            <person name="Sudo H."/>
            <person name="Hosoiri T."/>
            <person name="Kaku Y."/>
            <person name="Kodaira H."/>
            <person name="Kondo H."/>
            <person name="Sugawara M."/>
            <person name="Takahashi M."/>
            <person name="Kanda K."/>
            <person name="Yokoi T."/>
            <person name="Furuya T."/>
            <person name="Kikkawa E."/>
            <person name="Omura Y."/>
            <person name="Abe K."/>
            <person name="Kamihara K."/>
            <person name="Katsuta N."/>
            <person name="Sato K."/>
            <person name="Tanikawa M."/>
            <person name="Yamazaki M."/>
            <person name="Ninomiya K."/>
            <person name="Ishibashi T."/>
            <person name="Yamashita H."/>
            <person name="Murakawa K."/>
            <person name="Fujimori K."/>
            <person name="Tanai H."/>
            <person name="Kimata M."/>
            <person name="Watanabe M."/>
            <person name="Hiraoka S."/>
            <person name="Chiba Y."/>
            <person name="Ishida S."/>
            <person name="Ono Y."/>
            <person name="Takiguchi S."/>
            <person name="Watanabe S."/>
            <person name="Yosida M."/>
            <person name="Hotuta T."/>
            <person name="Kusano J."/>
            <person name="Kanehori K."/>
            <person name="Takahashi-Fujii A."/>
            <person name="Hara H."/>
            <person name="Tanase T.-O."/>
            <person name="Nomura Y."/>
            <person name="Togiya S."/>
            <person name="Komai F."/>
            <person name="Hara R."/>
            <person name="Takeuchi K."/>
            <person name="Arita M."/>
            <person name="Imose N."/>
            <person name="Musashino K."/>
            <person name="Yuuki H."/>
            <person name="Oshima A."/>
            <person name="Sasaki N."/>
            <person name="Aotsuka S."/>
            <person name="Yoshikawa Y."/>
            <person name="Matsunawa H."/>
            <person name="Ichihara T."/>
            <person name="Shiohata N."/>
            <person name="Sano S."/>
            <person name="Moriya S."/>
            <person name="Momiyama H."/>
            <person name="Satoh N."/>
            <person name="Takami S."/>
            <person name="Terashima Y."/>
            <person name="Suzuki O."/>
            <person name="Nakagawa S."/>
            <person name="Senoh A."/>
            <person name="Mizoguchi H."/>
            <person name="Goto Y."/>
            <person name="Shimizu F."/>
            <person name="Wakebe H."/>
            <person name="Hishigaki H."/>
            <person name="Watanabe T."/>
            <person name="Sugiyama A."/>
            <person name="Takemoto M."/>
            <person name="Kawakami B."/>
            <person name="Yamazaki M."/>
            <person name="Watanabe K."/>
            <person name="Kumagai A."/>
            <person name="Itakura S."/>
            <person name="Fukuzumi Y."/>
            <person name="Fujimori Y."/>
            <person name="Komiyama M."/>
            <person name="Tashiro H."/>
            <person name="Tanigami A."/>
            <person name="Fujiwara T."/>
            <person name="Ono T."/>
            <person name="Yamada K."/>
            <person name="Fujii Y."/>
            <person name="Ozaki K."/>
            <person name="Hirao M."/>
            <person name="Ohmori Y."/>
            <person name="Kawabata A."/>
            <person name="Hikiji T."/>
            <person name="Kobatake N."/>
            <person name="Inagaki H."/>
            <person name="Ikema Y."/>
            <person name="Okamoto S."/>
            <person name="Okitani R."/>
            <person name="Kawakami T."/>
            <person name="Noguchi S."/>
            <person name="Itoh T."/>
            <person name="Shigeta K."/>
            <person name="Senba T."/>
            <person name="Matsumura K."/>
            <person name="Nakajima Y."/>
            <person name="Mizuno T."/>
            <person name="Morinaga M."/>
            <person name="Sasaki M."/>
            <person name="Togashi T."/>
            <person name="Oyama M."/>
            <person name="Hata H."/>
            <person name="Watanabe M."/>
            <person name="Komatsu T."/>
            <person name="Mizushima-Sugano J."/>
            <person name="Satoh T."/>
            <person name="Shirai Y."/>
            <person name="Takahashi Y."/>
            <person name="Nakagawa K."/>
            <person name="Okumura K."/>
            <person name="Nagase T."/>
            <person name="Nomura N."/>
            <person name="Kikuchi H."/>
            <person name="Masuho Y."/>
            <person name="Yamashita R."/>
            <person name="Nakai K."/>
            <person name="Yada T."/>
            <person name="Nakamura Y."/>
            <person name="Ohara O."/>
            <person name="Isogai T."/>
            <person name="Sugano S."/>
        </authorList>
    </citation>
    <scope>NUCLEOTIDE SEQUENCE [LARGE SCALE MRNA]</scope>
    <scope>VARIANT LYS-197</scope>
    <source>
        <tissue>Trachea</tissue>
    </source>
</reference>
<reference key="2">
    <citation type="journal article" date="2004" name="Nature">
        <title>The DNA sequence and comparative analysis of human chromosome 5.</title>
        <authorList>
            <person name="Schmutz J."/>
            <person name="Martin J."/>
            <person name="Terry A."/>
            <person name="Couronne O."/>
            <person name="Grimwood J."/>
            <person name="Lowry S."/>
            <person name="Gordon L.A."/>
            <person name="Scott D."/>
            <person name="Xie G."/>
            <person name="Huang W."/>
            <person name="Hellsten U."/>
            <person name="Tran-Gyamfi M."/>
            <person name="She X."/>
            <person name="Prabhakar S."/>
            <person name="Aerts A."/>
            <person name="Altherr M."/>
            <person name="Bajorek E."/>
            <person name="Black S."/>
            <person name="Branscomb E."/>
            <person name="Caoile C."/>
            <person name="Challacombe J.F."/>
            <person name="Chan Y.M."/>
            <person name="Denys M."/>
            <person name="Detter J.C."/>
            <person name="Escobar J."/>
            <person name="Flowers D."/>
            <person name="Fotopulos D."/>
            <person name="Glavina T."/>
            <person name="Gomez M."/>
            <person name="Gonzales E."/>
            <person name="Goodstein D."/>
            <person name="Grigoriev I."/>
            <person name="Groza M."/>
            <person name="Hammon N."/>
            <person name="Hawkins T."/>
            <person name="Haydu L."/>
            <person name="Israni S."/>
            <person name="Jett J."/>
            <person name="Kadner K."/>
            <person name="Kimball H."/>
            <person name="Kobayashi A."/>
            <person name="Lopez F."/>
            <person name="Lou Y."/>
            <person name="Martinez D."/>
            <person name="Medina C."/>
            <person name="Morgan J."/>
            <person name="Nandkeshwar R."/>
            <person name="Noonan J.P."/>
            <person name="Pitluck S."/>
            <person name="Pollard M."/>
            <person name="Predki P."/>
            <person name="Priest J."/>
            <person name="Ramirez L."/>
            <person name="Retterer J."/>
            <person name="Rodriguez A."/>
            <person name="Rogers S."/>
            <person name="Salamov A."/>
            <person name="Salazar A."/>
            <person name="Thayer N."/>
            <person name="Tice H."/>
            <person name="Tsai M."/>
            <person name="Ustaszewska A."/>
            <person name="Vo N."/>
            <person name="Wheeler J."/>
            <person name="Wu K."/>
            <person name="Yang J."/>
            <person name="Dickson M."/>
            <person name="Cheng J.-F."/>
            <person name="Eichler E.E."/>
            <person name="Olsen A."/>
            <person name="Pennacchio L.A."/>
            <person name="Rokhsar D.S."/>
            <person name="Richardson P."/>
            <person name="Lucas S.M."/>
            <person name="Myers R.M."/>
            <person name="Rubin E.M."/>
        </authorList>
    </citation>
    <scope>NUCLEOTIDE SEQUENCE [LARGE SCALE GENOMIC DNA]</scope>
</reference>
<reference key="3">
    <citation type="journal article" date="2010" name="Cell Cycle">
        <title>Role of a novel coiled-coil domain-containing protein CCDC69 in regulating central spindle assembly.</title>
        <authorList>
            <person name="Pal D."/>
            <person name="Wu D."/>
            <person name="Haruta A."/>
            <person name="Matsumura F."/>
            <person name="Wei Q."/>
        </authorList>
    </citation>
    <scope>FUNCTION</scope>
    <scope>SUBCELLULAR LOCATION</scope>
    <scope>TISSUE SPECIFICITY</scope>
</reference>
<reference key="4">
    <citation type="journal article" date="2013" name="J. Proteome Res.">
        <title>Toward a comprehensive characterization of a human cancer cell phosphoproteome.</title>
        <authorList>
            <person name="Zhou H."/>
            <person name="Di Palma S."/>
            <person name="Preisinger C."/>
            <person name="Peng M."/>
            <person name="Polat A.N."/>
            <person name="Heck A.J."/>
            <person name="Mohammed S."/>
        </authorList>
    </citation>
    <scope>PHOSPHORYLATION [LARGE SCALE ANALYSIS] AT SER-241</scope>
    <scope>IDENTIFICATION BY MASS SPECTROMETRY [LARGE SCALE ANALYSIS]</scope>
    <source>
        <tissue>Erythroleukemia</tissue>
    </source>
</reference>
<reference key="5">
    <citation type="journal article" date="2014" name="J. Proteomics">
        <title>An enzyme assisted RP-RPLC approach for in-depth analysis of human liver phosphoproteome.</title>
        <authorList>
            <person name="Bian Y."/>
            <person name="Song C."/>
            <person name="Cheng K."/>
            <person name="Dong M."/>
            <person name="Wang F."/>
            <person name="Huang J."/>
            <person name="Sun D."/>
            <person name="Wang L."/>
            <person name="Ye M."/>
            <person name="Zou H."/>
        </authorList>
    </citation>
    <scope>PHOSPHORYLATION [LARGE SCALE ANALYSIS] AT SER-241</scope>
    <scope>IDENTIFICATION BY MASS SPECTROMETRY [LARGE SCALE ANALYSIS]</scope>
    <source>
        <tissue>Liver</tissue>
    </source>
</reference>
<gene>
    <name evidence="8" type="primary">CCDC69</name>
</gene>
<sequence length="296" mass="34796">MGCRHSRLSSCKPPKKKRQEPEPEQPPRPEPHELGPLNGDTAITVQLCASEEAERHQKDITRILQQHEEEKKKWAQQVEKERELELRDRLDEQQRVLEGKNEEALQVLRASYEQEKEALTHSFREASSTQQETIDRLTSQLEAFQAKMKRVEESILSRNYKKHIQDYGSPSQFWEQELESLHFVIEMKNERIHELDRRLILMETVKEKNLILEEKITTLQQENEDLHVRSRNQVVLSRQLSEDLLLTREALEKEVQLRRQLQQEKEELLYRVLGANASPAFPLAPVTPTEVSFLAT</sequence>
<comment type="function">
    <text evidence="7">May act as a scaffold to regulate the recruitment and assembly of spindle midzone components. Required for the localization of AURKB and PLK1 to the spindle midzone.</text>
</comment>
<comment type="subcellular location">
    <subcellularLocation>
        <location evidence="5">Cytoplasm</location>
        <location evidence="5">Cytoskeleton</location>
        <location evidence="5">Spindle</location>
    </subcellularLocation>
    <subcellularLocation>
        <location evidence="5">Midbody</location>
    </subcellularLocation>
    <text evidence="5">During early anaphase, localizes along overlapping interpolar microtubules between the separating chromosomes. During late anaphase, localizes to the center of spindle midzone. Concentrated at the midbody during telophase.</text>
</comment>
<comment type="tissue specificity">
    <text evidence="5">Highly expressed in duodenum, esophagus, pancreas, prostate, salivary gland, thymus and urinary bladder.</text>
</comment>
<comment type="similarity">
    <text evidence="6">Belongs to the CCDC69 family.</text>
</comment>